<dbReference type="EC" id="1.97.1.12" evidence="1"/>
<dbReference type="EMBL" id="AJ133191">
    <property type="protein sequence ID" value="CAB64200.1"/>
    <property type="molecule type" value="Genomic_DNA"/>
</dbReference>
<dbReference type="EMBL" id="BX548174">
    <property type="protein sequence ID" value="CAE19983.1"/>
    <property type="molecule type" value="Genomic_DNA"/>
</dbReference>
<dbReference type="RefSeq" id="WP_011133152.1">
    <property type="nucleotide sequence ID" value="NC_005072.1"/>
</dbReference>
<dbReference type="SMR" id="Q9RC08"/>
<dbReference type="STRING" id="59919.PMM1524"/>
<dbReference type="KEGG" id="pmm:PMM1524"/>
<dbReference type="eggNOG" id="COG2885">
    <property type="taxonomic scope" value="Bacteria"/>
</dbReference>
<dbReference type="HOGENOM" id="CLU_016126_1_0_3"/>
<dbReference type="OrthoDB" id="499313at2"/>
<dbReference type="Proteomes" id="UP000001026">
    <property type="component" value="Chromosome"/>
</dbReference>
<dbReference type="GO" id="GO:0009522">
    <property type="term" value="C:photosystem I"/>
    <property type="evidence" value="ECO:0007669"/>
    <property type="project" value="UniProtKB-KW"/>
</dbReference>
<dbReference type="GO" id="GO:0031676">
    <property type="term" value="C:plasma membrane-derived thylakoid membrane"/>
    <property type="evidence" value="ECO:0007669"/>
    <property type="project" value="UniProtKB-SubCell"/>
</dbReference>
<dbReference type="GO" id="GO:0051539">
    <property type="term" value="F:4 iron, 4 sulfur cluster binding"/>
    <property type="evidence" value="ECO:0007669"/>
    <property type="project" value="UniProtKB-KW"/>
</dbReference>
<dbReference type="GO" id="GO:0016168">
    <property type="term" value="F:chlorophyll binding"/>
    <property type="evidence" value="ECO:0007669"/>
    <property type="project" value="UniProtKB-KW"/>
</dbReference>
<dbReference type="GO" id="GO:0009055">
    <property type="term" value="F:electron transfer activity"/>
    <property type="evidence" value="ECO:0007669"/>
    <property type="project" value="UniProtKB-UniRule"/>
</dbReference>
<dbReference type="GO" id="GO:0000287">
    <property type="term" value="F:magnesium ion binding"/>
    <property type="evidence" value="ECO:0007669"/>
    <property type="project" value="UniProtKB-UniRule"/>
</dbReference>
<dbReference type="GO" id="GO:0016491">
    <property type="term" value="F:oxidoreductase activity"/>
    <property type="evidence" value="ECO:0007669"/>
    <property type="project" value="UniProtKB-KW"/>
</dbReference>
<dbReference type="GO" id="GO:0015979">
    <property type="term" value="P:photosynthesis"/>
    <property type="evidence" value="ECO:0007669"/>
    <property type="project" value="UniProtKB-UniRule"/>
</dbReference>
<dbReference type="Gene3D" id="1.20.1130.10">
    <property type="entry name" value="Photosystem I PsaA/PsaB"/>
    <property type="match status" value="1"/>
</dbReference>
<dbReference type="HAMAP" id="MF_00458">
    <property type="entry name" value="PSI_PsaA"/>
    <property type="match status" value="1"/>
</dbReference>
<dbReference type="InterPro" id="IPR006243">
    <property type="entry name" value="PSI_PsaA"/>
</dbReference>
<dbReference type="InterPro" id="IPR001280">
    <property type="entry name" value="PSI_PsaA/B"/>
</dbReference>
<dbReference type="InterPro" id="IPR020586">
    <property type="entry name" value="PSI_PsaA/B_CS"/>
</dbReference>
<dbReference type="InterPro" id="IPR036408">
    <property type="entry name" value="PSI_PsaA/B_sf"/>
</dbReference>
<dbReference type="NCBIfam" id="TIGR01335">
    <property type="entry name" value="psaA"/>
    <property type="match status" value="1"/>
</dbReference>
<dbReference type="PANTHER" id="PTHR30128">
    <property type="entry name" value="OUTER MEMBRANE PROTEIN, OMPA-RELATED"/>
    <property type="match status" value="1"/>
</dbReference>
<dbReference type="PANTHER" id="PTHR30128:SF19">
    <property type="entry name" value="PHOTOSYSTEM I P700 CHLOROPHYLL A APOPROTEIN A1-RELATED"/>
    <property type="match status" value="1"/>
</dbReference>
<dbReference type="Pfam" id="PF00223">
    <property type="entry name" value="PsaA_PsaB"/>
    <property type="match status" value="1"/>
</dbReference>
<dbReference type="PIRSF" id="PIRSF002905">
    <property type="entry name" value="PSI_A"/>
    <property type="match status" value="1"/>
</dbReference>
<dbReference type="PRINTS" id="PR00257">
    <property type="entry name" value="PHOTSYSPSAAB"/>
</dbReference>
<dbReference type="SUPFAM" id="SSF81558">
    <property type="entry name" value="Photosystem I subunits PsaA/PsaB"/>
    <property type="match status" value="1"/>
</dbReference>
<dbReference type="PROSITE" id="PS00419">
    <property type="entry name" value="PHOTOSYSTEM_I_PSAAB"/>
    <property type="match status" value="1"/>
</dbReference>
<feature type="chain" id="PRO_0000088590" description="Photosystem I P700 chlorophyll a apoprotein A1">
    <location>
        <begin position="1"/>
        <end position="767"/>
    </location>
</feature>
<feature type="transmembrane region" description="Helical; Name=I" evidence="1">
    <location>
        <begin position="76"/>
        <end position="99"/>
    </location>
</feature>
<feature type="transmembrane region" description="Helical; Name=II" evidence="1">
    <location>
        <begin position="162"/>
        <end position="185"/>
    </location>
</feature>
<feature type="transmembrane region" description="Helical; Name=III" evidence="1">
    <location>
        <begin position="201"/>
        <end position="225"/>
    </location>
</feature>
<feature type="transmembrane region" description="Helical; Name=IV" evidence="1">
    <location>
        <begin position="309"/>
        <end position="327"/>
    </location>
</feature>
<feature type="transmembrane region" description="Helical; Name=V" evidence="1">
    <location>
        <begin position="368"/>
        <end position="391"/>
    </location>
</feature>
<feature type="transmembrane region" description="Helical; Name=VI" evidence="1">
    <location>
        <begin position="407"/>
        <end position="433"/>
    </location>
</feature>
<feature type="transmembrane region" description="Helical; Name=VII" evidence="1">
    <location>
        <begin position="455"/>
        <end position="477"/>
    </location>
</feature>
<feature type="transmembrane region" description="Helical; Name=VIII" evidence="1">
    <location>
        <begin position="558"/>
        <end position="576"/>
    </location>
</feature>
<feature type="transmembrane region" description="Helical; Name=IX" evidence="1">
    <location>
        <begin position="616"/>
        <end position="637"/>
    </location>
</feature>
<feature type="transmembrane region" description="Helical; Name=X" evidence="1">
    <location>
        <begin position="681"/>
        <end position="703"/>
    </location>
</feature>
<feature type="transmembrane region" description="Helical; Name=XI" evidence="1">
    <location>
        <begin position="741"/>
        <end position="761"/>
    </location>
</feature>
<feature type="region of interest" description="Disordered" evidence="2">
    <location>
        <begin position="1"/>
        <end position="22"/>
    </location>
</feature>
<feature type="compositionally biased region" description="Basic and acidic residues" evidence="2">
    <location>
        <begin position="8"/>
        <end position="22"/>
    </location>
</feature>
<feature type="binding site" evidence="1">
    <location>
        <position position="600"/>
    </location>
    <ligand>
        <name>[4Fe-4S] cluster</name>
        <dbReference type="ChEBI" id="CHEBI:49883"/>
        <note>ligand shared between dimeric partners</note>
    </ligand>
</feature>
<feature type="binding site" evidence="1">
    <location>
        <position position="609"/>
    </location>
    <ligand>
        <name>[4Fe-4S] cluster</name>
        <dbReference type="ChEBI" id="CHEBI:49883"/>
        <note>ligand shared between dimeric partners</note>
    </ligand>
</feature>
<feature type="binding site" description="axial binding residue" evidence="1">
    <location>
        <position position="692"/>
    </location>
    <ligand>
        <name>divinylchlorophyll a'</name>
        <dbReference type="ChEBI" id="CHEBI:189420"/>
        <label>A1</label>
    </ligand>
    <ligandPart>
        <name>Mg</name>
        <dbReference type="ChEBI" id="CHEBI:25107"/>
    </ligandPart>
</feature>
<feature type="binding site" description="axial binding residue" evidence="1">
    <location>
        <position position="700"/>
    </location>
    <ligand>
        <name>divinyl chlorophyll a</name>
        <dbReference type="ChEBI" id="CHEBI:73095"/>
        <label>A3</label>
    </ligand>
    <ligandPart>
        <name>Mg</name>
        <dbReference type="ChEBI" id="CHEBI:25107"/>
    </ligandPart>
</feature>
<feature type="binding site" evidence="1">
    <location>
        <position position="708"/>
    </location>
    <ligand>
        <name>divinyl chlorophyll a</name>
        <dbReference type="ChEBI" id="CHEBI:73095"/>
        <label>A3</label>
    </ligand>
</feature>
<feature type="binding site" evidence="1">
    <location>
        <position position="709"/>
    </location>
    <ligand>
        <name>phylloquinone</name>
        <dbReference type="ChEBI" id="CHEBI:18067"/>
        <label>A</label>
    </ligand>
</feature>
<proteinExistence type="evidence at transcript level"/>
<protein>
    <recommendedName>
        <fullName evidence="1">Photosystem I P700 chlorophyll a apoprotein A1</fullName>
        <ecNumber evidence="1">1.97.1.12</ecNumber>
    </recommendedName>
    <alternativeName>
        <fullName evidence="1">PsaA</fullName>
    </alternativeName>
</protein>
<reference key="1">
    <citation type="journal article" date="2000" name="Photosyn. Res.">
        <title>Rapid evolutionary divergence of photosystem I core subunits PsaA and PsaB in the marine prokaryote Prochlorococcus.</title>
        <authorList>
            <person name="van der Staay G.W.M."/>
            <person name="Moon-van der Staay S.Y."/>
            <person name="Garczarek L."/>
            <person name="Partensky F."/>
        </authorList>
    </citation>
    <scope>NUCLEOTIDE SEQUENCE [GENOMIC DNA]</scope>
</reference>
<reference key="2">
    <citation type="journal article" date="2003" name="Nature">
        <title>Genome divergence in two Prochlorococcus ecotypes reflects oceanic niche differentiation.</title>
        <authorList>
            <person name="Rocap G."/>
            <person name="Larimer F.W."/>
            <person name="Lamerdin J.E."/>
            <person name="Malfatti S."/>
            <person name="Chain P."/>
            <person name="Ahlgren N.A."/>
            <person name="Arellano A."/>
            <person name="Coleman M."/>
            <person name="Hauser L."/>
            <person name="Hess W.R."/>
            <person name="Johnson Z.I."/>
            <person name="Land M.L."/>
            <person name="Lindell D."/>
            <person name="Post A.F."/>
            <person name="Regala W."/>
            <person name="Shah M."/>
            <person name="Shaw S.L."/>
            <person name="Steglich C."/>
            <person name="Sullivan M.B."/>
            <person name="Ting C.S."/>
            <person name="Tolonen A."/>
            <person name="Webb E.A."/>
            <person name="Zinser E.R."/>
            <person name="Chisholm S.W."/>
        </authorList>
    </citation>
    <scope>NUCLEOTIDE SEQUENCE [LARGE SCALE GENOMIC DNA]</scope>
    <source>
        <strain>CCMP1986 / NIES-2087 / MED4</strain>
    </source>
</reference>
<reference key="3">
    <citation type="journal article" date="2003" name="Nature">
        <title>Low-light-adapted Prochlorococcus species possess specific antennae for each photosystem.</title>
        <authorList>
            <person name="Bibby T.S."/>
            <person name="Mary I."/>
            <person name="Nield J."/>
            <person name="Partensky F."/>
            <person name="Barber J."/>
        </authorList>
    </citation>
    <scope>REPRESSION UNDER IRON-STARVATION</scope>
</reference>
<evidence type="ECO:0000255" key="1">
    <source>
        <dbReference type="HAMAP-Rule" id="MF_00458"/>
    </source>
</evidence>
<evidence type="ECO:0000256" key="2">
    <source>
        <dbReference type="SAM" id="MobiDB-lite"/>
    </source>
</evidence>
<evidence type="ECO:0000269" key="3">
    <source>
    </source>
</evidence>
<sequence>MTISPPESGEKDKKILESPVKADPRPIDFAKLDKPGFWSSKLSKGPKTTTWIWNLHADAHDFDIHTGDAEEATRKIFSAHFGHLAVIFIWMSAAFFHGARFSNYSGWLADPTHVKPGAQQVWAIVGQEMLNGDLGANYNGIQISSGVFHMWRAWGITNESELMALAIGAVVMAALMLHAGIFHYHKAAPKMEWFQNIESMLNHHIAGLVGLGSLAWAGHCIHIGAPTAALLDAIDAGTPLVINGKEIATIADMPMPHQLCDPQIIAQIFPGLASGTGNFFSLNWLAFSDFLTFKGGLNPVTGSLWMTDVSHHHLAFGVIAIIGGHMYRTNYGIGHSMKEILDSQQGDPILFPAPKGHQGLFEFMAESRHAQLSVNLAMLGSLSILISHHMYAMPPYPYIATDYMTVLGLFTHHMWIGGLFIVGAGAHAGIAMVRDYDPAKHIDNVLDRILKARDALISHLNWVCMWLGFHSFGLYIHNDTMRALGRPQDMFSDSAIQLQPIFAQWVQSIQASAVGTSILAGTAEALPHKAISEVFNGSLVEVGGKVAIAPIPLGTADLMIHHIHAFQIHVTVLILLKGVLYARSSRLIPDKASLGFRFPCDGPGRGGTCQVSSWDHVFLGLFWMYNCLSIVIFHFSWKMQSDVWGLTGGNFSQSAITINGWLRDFLWAQSSQVLTSYGSAISMYGLMFLGAHFIWAFSLMFLFSGRGYWQELFESIVWAHNKLKVAPTIQPRALSITQGRAVGVTHFLVGGIATTWAFFHARLFGLG</sequence>
<comment type="function">
    <text evidence="1">PsaA and PsaB bind P700, the primary electron donor of photosystem I (PSI), as well as the electron acceptors A0, A1 and FX. PSI is a plastocyanin/cytochrome c6-ferredoxin oxidoreductase, converting photonic excitation into a charge separation, which transfers an electron from the donor P700 chlorophyll pair to the spectroscopically characterized acceptors A0, A1, FX, FA and FB in turn. Oxidized P700 is reduced on the lumenal side of the thylakoid membrane by plastocyanin or cytochrome c6.</text>
</comment>
<comment type="catalytic activity">
    <reaction evidence="1">
        <text>reduced [plastocyanin] + hnu + oxidized [2Fe-2S]-[ferredoxin] = oxidized [plastocyanin] + reduced [2Fe-2S]-[ferredoxin]</text>
        <dbReference type="Rhea" id="RHEA:30407"/>
        <dbReference type="Rhea" id="RHEA-COMP:10000"/>
        <dbReference type="Rhea" id="RHEA-COMP:10001"/>
        <dbReference type="Rhea" id="RHEA-COMP:10039"/>
        <dbReference type="Rhea" id="RHEA-COMP:10040"/>
        <dbReference type="ChEBI" id="CHEBI:29036"/>
        <dbReference type="ChEBI" id="CHEBI:30212"/>
        <dbReference type="ChEBI" id="CHEBI:33737"/>
        <dbReference type="ChEBI" id="CHEBI:33738"/>
        <dbReference type="ChEBI" id="CHEBI:49552"/>
        <dbReference type="EC" id="1.97.1.12"/>
    </reaction>
</comment>
<comment type="cofactor">
    <text evidence="1">PSI electron transfer chain: 5 divinyl chlorophyll a, 1 divinyl chlorophyll a', 2 phylloquinones and 3 4Fe-4S clusters. PSI core antenna: 90 divinyl chlorophyll a, 22 carotenoids, 3 phospholipids and 1 galactolipid. P700 is a divinyl chlorophyll a/divinyl chlorophyll a' dimer, A0 is one or more divinyl chlorophyll a, A1 is one or both phylloquinones and FX is a shared 4Fe-4S iron-sulfur center.</text>
</comment>
<comment type="subunit">
    <text evidence="1">The PsaA/B heterodimer binds the P700 divinyl chlorophyll special pair and subsequent electron acceptors. PSI consists of a core antenna complex that captures photons, and an electron transfer chain that converts photonic excitation into a charge separation. The cyanobacterial PSI reaction center is composed of one copy each of PsaA,B,C,D,E,F,I,J,K,L,M and X, and forms trimeric complexes.</text>
</comment>
<comment type="subcellular location">
    <subcellularLocation>
        <location evidence="1">Cellular thylakoid membrane</location>
        <topology evidence="1">Multi-pass membrane protein</topology>
    </subcellularLocation>
</comment>
<comment type="induction">
    <text evidence="3">Transcription decreases slightly upon iron starvation.</text>
</comment>
<comment type="similarity">
    <text evidence="1">Belongs to the PsaA/PsaB family.</text>
</comment>
<gene>
    <name evidence="1" type="primary">psaA</name>
    <name type="ordered locus">PMM1524</name>
</gene>
<organism>
    <name type="scientific">Prochlorococcus marinus subsp. pastoris (strain CCMP1986 / NIES-2087 / MED4)</name>
    <dbReference type="NCBI Taxonomy" id="59919"/>
    <lineage>
        <taxon>Bacteria</taxon>
        <taxon>Bacillati</taxon>
        <taxon>Cyanobacteriota</taxon>
        <taxon>Cyanophyceae</taxon>
        <taxon>Synechococcales</taxon>
        <taxon>Prochlorococcaceae</taxon>
        <taxon>Prochlorococcus</taxon>
    </lineage>
</organism>
<name>PSAA_PROMP</name>
<keyword id="KW-0004">4Fe-4S</keyword>
<keyword id="KW-0148">Chlorophyll</keyword>
<keyword id="KW-0157">Chromophore</keyword>
<keyword id="KW-0249">Electron transport</keyword>
<keyword id="KW-0408">Iron</keyword>
<keyword id="KW-0411">Iron-sulfur</keyword>
<keyword id="KW-0460">Magnesium</keyword>
<keyword id="KW-0472">Membrane</keyword>
<keyword id="KW-0479">Metal-binding</keyword>
<keyword id="KW-0560">Oxidoreductase</keyword>
<keyword id="KW-0602">Photosynthesis</keyword>
<keyword id="KW-0603">Photosystem I</keyword>
<keyword id="KW-0793">Thylakoid</keyword>
<keyword id="KW-0812">Transmembrane</keyword>
<keyword id="KW-1133">Transmembrane helix</keyword>
<keyword id="KW-0813">Transport</keyword>
<accession>Q9RC08</accession>